<comment type="function">
    <text evidence="3">Probable neurotoxin.</text>
</comment>
<comment type="subcellular location">
    <subcellularLocation>
        <location evidence="4">Secreted</location>
    </subcellularLocation>
</comment>
<comment type="tissue specificity">
    <text evidence="4">Expressed by the venom duct.</text>
</comment>
<comment type="domain">
    <text evidence="3">The cysteine framework is VI/VII (C-C-CC-C-C).</text>
</comment>
<comment type="domain">
    <text evidence="3">The presence of a 'disulfide through disulfide knot' structurally defines this protein as a knottin.</text>
</comment>
<comment type="similarity">
    <text evidence="3">Belongs to the conotoxin O1 superfamily.</text>
</comment>
<name>O1620_CONCL</name>
<proteinExistence type="inferred from homology"/>
<accession>P0DTY2</accession>
<keyword id="KW-1015">Disulfide bond</keyword>
<keyword id="KW-0960">Knottin</keyword>
<keyword id="KW-0528">Neurotoxin</keyword>
<keyword id="KW-0964">Secreted</keyword>
<keyword id="KW-0732">Signal</keyword>
<keyword id="KW-0800">Toxin</keyword>
<reference key="1">
    <citation type="journal article" date="2019" name="Toxins">
        <title>The diversified O-superfamily in Californiconus californicus presents a conotoxin with antimycobacterial activity.</title>
        <authorList>
            <person name="Bernaldez-Sarabia J."/>
            <person name="Figueroa-Montiel A."/>
            <person name="Duenas S."/>
            <person name="Cervantes-Luevano K."/>
            <person name="Beltran J.A."/>
            <person name="Ortiz E."/>
            <person name="Jimenez S."/>
            <person name="Possani L.D."/>
            <person name="Paniagua-Solis J.F."/>
            <person name="Gonzalez-Canudas J."/>
            <person name="Licea-Navarro A."/>
        </authorList>
    </citation>
    <scope>NUCLEOTIDE SEQUENCE [MRNA]</scope>
    <source>
        <tissue>Venom duct</tissue>
    </source>
</reference>
<evidence type="ECO:0000255" key="1"/>
<evidence type="ECO:0000303" key="2">
    <source>
    </source>
</evidence>
<evidence type="ECO:0000305" key="3"/>
<evidence type="ECO:0000305" key="4">
    <source>
    </source>
</evidence>
<organism>
    <name type="scientific">Californiconus californicus</name>
    <name type="common">California cone</name>
    <name type="synonym">Conus californicus</name>
    <dbReference type="NCBI Taxonomy" id="1736779"/>
    <lineage>
        <taxon>Eukaryota</taxon>
        <taxon>Metazoa</taxon>
        <taxon>Spiralia</taxon>
        <taxon>Lophotrochozoa</taxon>
        <taxon>Mollusca</taxon>
        <taxon>Gastropoda</taxon>
        <taxon>Caenogastropoda</taxon>
        <taxon>Neogastropoda</taxon>
        <taxon>Conoidea</taxon>
        <taxon>Conidae</taxon>
        <taxon>Californiconus</taxon>
    </lineage>
</organism>
<sequence>MKLTCVLIVAVLILTACQVIAADGWFGEESSCWWCTGQNKCCEEAQVCQSVNYACPPARR</sequence>
<dbReference type="GO" id="GO:0005576">
    <property type="term" value="C:extracellular region"/>
    <property type="evidence" value="ECO:0007669"/>
    <property type="project" value="UniProtKB-SubCell"/>
</dbReference>
<dbReference type="GO" id="GO:0090729">
    <property type="term" value="F:toxin activity"/>
    <property type="evidence" value="ECO:0007669"/>
    <property type="project" value="UniProtKB-KW"/>
</dbReference>
<protein>
    <recommendedName>
        <fullName evidence="3">Conotoxin Cal6.20</fullName>
    </recommendedName>
    <alternativeName>
        <fullName evidence="2">O1_cal6.20</fullName>
    </alternativeName>
</protein>
<feature type="signal peptide" evidence="1">
    <location>
        <begin position="1"/>
        <end position="22"/>
    </location>
</feature>
<feature type="chain" id="PRO_0000450964" description="Conotoxin Cal6.20" evidence="3">
    <location>
        <begin position="23"/>
        <end position="60"/>
    </location>
</feature>
<feature type="disulfide bond" evidence="3">
    <location>
        <begin position="32"/>
        <end position="42"/>
    </location>
</feature>
<feature type="disulfide bond" evidence="3">
    <location>
        <begin position="35"/>
        <end position="48"/>
    </location>
</feature>
<feature type="disulfide bond" evidence="3">
    <location>
        <begin position="41"/>
        <end position="55"/>
    </location>
</feature>